<feature type="signal peptide" evidence="1">
    <location>
        <begin position="1"/>
        <end position="30"/>
    </location>
</feature>
<feature type="chain" id="PRO_0000014104" description="Uncharacterized protein Mb1440c">
    <location>
        <begin position="31"/>
        <end position="274"/>
    </location>
</feature>
<protein>
    <recommendedName>
        <fullName>Uncharacterized protein Mb1440c</fullName>
    </recommendedName>
</protein>
<evidence type="ECO:0000255" key="1"/>
<evidence type="ECO:0000305" key="2"/>
<sequence>MTIDTPAREDQTLAATHRAMWALGDYALMAEEVMAPLGPILVAAAGIGPGVRVLDVAAGSGNISLPAAKTGATVISTDLTPELLQRSQARAAQQGLTLQYQEANAQALPFADDEFDTVISAIGVMFAPDHQAAADELVRVCRPGGTIGVISWTCEGFFGRMLATIRPYRPSVSADLPPSALWGREAYVTGLLGDGVTGLKTARGLLEVKRFDTAQAVHDYFKNNYGPTIEAYAHIGDNAVLAAELDRQLVELAAQYLSDGVMEWEYLLLTAEKR</sequence>
<name>Y1440_MYCBO</name>
<accession>P64842</accession>
<accession>A0A1R3Y0D7</accession>
<accession>P71673</accession>
<accession>X2BI04</accession>
<gene>
    <name type="ordered locus">BQ2027_MB1440C</name>
</gene>
<reference key="1">
    <citation type="journal article" date="2003" name="Proc. Natl. Acad. Sci. U.S.A.">
        <title>The complete genome sequence of Mycobacterium bovis.</title>
        <authorList>
            <person name="Garnier T."/>
            <person name="Eiglmeier K."/>
            <person name="Camus J.-C."/>
            <person name="Medina N."/>
            <person name="Mansoor H."/>
            <person name="Pryor M."/>
            <person name="Duthoy S."/>
            <person name="Grondin S."/>
            <person name="Lacroix C."/>
            <person name="Monsempe C."/>
            <person name="Simon S."/>
            <person name="Harris B."/>
            <person name="Atkin R."/>
            <person name="Doggett J."/>
            <person name="Mayes R."/>
            <person name="Keating L."/>
            <person name="Wheeler P.R."/>
            <person name="Parkhill J."/>
            <person name="Barrell B.G."/>
            <person name="Cole S.T."/>
            <person name="Gordon S.V."/>
            <person name="Hewinson R.G."/>
        </authorList>
    </citation>
    <scope>NUCLEOTIDE SEQUENCE [LARGE SCALE GENOMIC DNA]</scope>
    <source>
        <strain>ATCC BAA-935 / AF2122/97</strain>
    </source>
</reference>
<reference key="2">
    <citation type="journal article" date="2017" name="Genome Announc.">
        <title>Updated reference genome sequence and annotation of Mycobacterium bovis AF2122/97.</title>
        <authorList>
            <person name="Malone K.M."/>
            <person name="Farrell D."/>
            <person name="Stuber T.P."/>
            <person name="Schubert O.T."/>
            <person name="Aebersold R."/>
            <person name="Robbe-Austerman S."/>
            <person name="Gordon S.V."/>
        </authorList>
    </citation>
    <scope>NUCLEOTIDE SEQUENCE [LARGE SCALE GENOMIC DNA]</scope>
    <scope>GENOME REANNOTATION</scope>
    <source>
        <strain>ATCC BAA-935 / AF2122/97</strain>
    </source>
</reference>
<dbReference type="EMBL" id="LT708304">
    <property type="protein sequence ID" value="SIU00043.1"/>
    <property type="molecule type" value="Genomic_DNA"/>
</dbReference>
<dbReference type="RefSeq" id="NP_855092.1">
    <property type="nucleotide sequence ID" value="NC_002945.3"/>
</dbReference>
<dbReference type="RefSeq" id="WP_003407297.1">
    <property type="nucleotide sequence ID" value="NC_002945.4"/>
</dbReference>
<dbReference type="SMR" id="P64842"/>
<dbReference type="KEGG" id="mbo:BQ2027_MB1440C"/>
<dbReference type="PATRIC" id="fig|233413.5.peg.1575"/>
<dbReference type="Proteomes" id="UP000001419">
    <property type="component" value="Chromosome"/>
</dbReference>
<dbReference type="GO" id="GO:0008757">
    <property type="term" value="F:S-adenosylmethionine-dependent methyltransferase activity"/>
    <property type="evidence" value="ECO:0007669"/>
    <property type="project" value="InterPro"/>
</dbReference>
<dbReference type="CDD" id="cd02440">
    <property type="entry name" value="AdoMet_MTases"/>
    <property type="match status" value="1"/>
</dbReference>
<dbReference type="Gene3D" id="3.40.50.150">
    <property type="entry name" value="Vaccinia Virus protein VP39"/>
    <property type="match status" value="1"/>
</dbReference>
<dbReference type="InterPro" id="IPR013216">
    <property type="entry name" value="Methyltransf_11"/>
</dbReference>
<dbReference type="InterPro" id="IPR029063">
    <property type="entry name" value="SAM-dependent_MTases_sf"/>
</dbReference>
<dbReference type="PANTHER" id="PTHR43591:SF24">
    <property type="entry name" value="2-METHOXY-6-POLYPRENYL-1,4-BENZOQUINOL METHYLASE, MITOCHONDRIAL"/>
    <property type="match status" value="1"/>
</dbReference>
<dbReference type="PANTHER" id="PTHR43591">
    <property type="entry name" value="METHYLTRANSFERASE"/>
    <property type="match status" value="1"/>
</dbReference>
<dbReference type="Pfam" id="PF08241">
    <property type="entry name" value="Methyltransf_11"/>
    <property type="match status" value="1"/>
</dbReference>
<dbReference type="SUPFAM" id="SSF53335">
    <property type="entry name" value="S-adenosyl-L-methionine-dependent methyltransferases"/>
    <property type="match status" value="1"/>
</dbReference>
<proteinExistence type="inferred from homology"/>
<keyword id="KW-1185">Reference proteome</keyword>
<keyword id="KW-0732">Signal</keyword>
<comment type="similarity">
    <text evidence="2">To M.tuberculosis Rv1403c.</text>
</comment>
<organism>
    <name type="scientific">Mycobacterium bovis (strain ATCC BAA-935 / AF2122/97)</name>
    <dbReference type="NCBI Taxonomy" id="233413"/>
    <lineage>
        <taxon>Bacteria</taxon>
        <taxon>Bacillati</taxon>
        <taxon>Actinomycetota</taxon>
        <taxon>Actinomycetes</taxon>
        <taxon>Mycobacteriales</taxon>
        <taxon>Mycobacteriaceae</taxon>
        <taxon>Mycobacterium</taxon>
        <taxon>Mycobacterium tuberculosis complex</taxon>
    </lineage>
</organism>